<protein>
    <recommendedName>
        <fullName evidence="4">Very-long-chain 3-oxoacyl-CoA reductase</fullName>
        <ecNumber evidence="4">1.1.1.330</ecNumber>
    </recommendedName>
    <alternativeName>
        <fullName evidence="4">3-ketoacyl-CoA reductase</fullName>
        <shortName evidence="4">3-ketoreductase</shortName>
        <shortName evidence="4">KAR</shortName>
    </alternativeName>
    <alternativeName>
        <fullName evidence="4">Microsomal beta-keto-reductase</fullName>
    </alternativeName>
</protein>
<sequence length="351" mass="38228">MGSLSDISFFDHLQELARRDCCVNALLWCAFTVGAVKLTTFMLSLISIALETTVLPSASYKKYGARKGAYALVTGASDGIGKEFALQLASKGFNVLLVSRTEAKLLELKQEIMAKYKVDARVLSVDFGVDNRLTYTAISELCGELPVTVLVNNVGVSHSIPVSFLETTEEELRGIITVNNTATLMVTQTVAPLVIANARRLQCRGLVLTMGSFGGLLPTPLLATYSGSKAFLQAWSAALAGELAPHNVDVQIVLSYLVTSAMSKVRRASALIPTPRAFVRSTLASLGRRVGAQERYATCTPYWSHALYHFLIENTVGVHSRLANAINYRFHADIRKRALRKAARKAAEKQE</sequence>
<gene>
    <name type="ordered locus">ADR059C</name>
</gene>
<accession>Q75A60</accession>
<reference key="1">
    <citation type="journal article" date="2004" name="Science">
        <title>The Ashbya gossypii genome as a tool for mapping the ancient Saccharomyces cerevisiae genome.</title>
        <authorList>
            <person name="Dietrich F.S."/>
            <person name="Voegeli S."/>
            <person name="Brachat S."/>
            <person name="Lerch A."/>
            <person name="Gates K."/>
            <person name="Steiner S."/>
            <person name="Mohr C."/>
            <person name="Poehlmann R."/>
            <person name="Luedi P."/>
            <person name="Choi S."/>
            <person name="Wing R.A."/>
            <person name="Flavier A."/>
            <person name="Gaffney T.D."/>
            <person name="Philippsen P."/>
        </authorList>
    </citation>
    <scope>NUCLEOTIDE SEQUENCE [LARGE SCALE GENOMIC DNA]</scope>
    <source>
        <strain>ATCC 10895 / CBS 109.51 / FGSC 9923 / NRRL Y-1056</strain>
    </source>
</reference>
<reference key="2">
    <citation type="journal article" date="2013" name="G3 (Bethesda)">
        <title>Genomes of Ashbya fungi isolated from insects reveal four mating-type loci, numerous translocations, lack of transposons, and distinct gene duplications.</title>
        <authorList>
            <person name="Dietrich F.S."/>
            <person name="Voegeli S."/>
            <person name="Kuo S."/>
            <person name="Philippsen P."/>
        </authorList>
    </citation>
    <scope>GENOME REANNOTATION</scope>
    <scope>SEQUENCE REVISION TO 214; 230; 232; 237; 240-242; 246; 273 AND 288</scope>
    <source>
        <strain>ATCC 10895 / CBS 109.51 / FGSC 9923 / NRRL Y-1056</strain>
    </source>
</reference>
<keyword id="KW-0256">Endoplasmic reticulum</keyword>
<keyword id="KW-0275">Fatty acid biosynthesis</keyword>
<keyword id="KW-0276">Fatty acid metabolism</keyword>
<keyword id="KW-0444">Lipid biosynthesis</keyword>
<keyword id="KW-0443">Lipid metabolism</keyword>
<keyword id="KW-0472">Membrane</keyword>
<keyword id="KW-0521">NADP</keyword>
<keyword id="KW-0560">Oxidoreductase</keyword>
<keyword id="KW-1185">Reference proteome</keyword>
<keyword id="KW-0812">Transmembrane</keyword>
<keyword id="KW-1133">Transmembrane helix</keyword>
<organism>
    <name type="scientific">Eremothecium gossypii (strain ATCC 10895 / CBS 109.51 / FGSC 9923 / NRRL Y-1056)</name>
    <name type="common">Yeast</name>
    <name type="synonym">Ashbya gossypii</name>
    <dbReference type="NCBI Taxonomy" id="284811"/>
    <lineage>
        <taxon>Eukaryota</taxon>
        <taxon>Fungi</taxon>
        <taxon>Dikarya</taxon>
        <taxon>Ascomycota</taxon>
        <taxon>Saccharomycotina</taxon>
        <taxon>Saccharomycetes</taxon>
        <taxon>Saccharomycetales</taxon>
        <taxon>Saccharomycetaceae</taxon>
        <taxon>Eremothecium</taxon>
    </lineage>
</organism>
<proteinExistence type="inferred from homology"/>
<name>MKAR_EREGS</name>
<evidence type="ECO:0000250" key="1">
    <source>
        <dbReference type="UniProtKB" id="L0E2Z4"/>
    </source>
</evidence>
<evidence type="ECO:0000250" key="2">
    <source>
        <dbReference type="UniProtKB" id="O93868"/>
    </source>
</evidence>
<evidence type="ECO:0000250" key="3">
    <source>
        <dbReference type="UniProtKB" id="P38286"/>
    </source>
</evidence>
<evidence type="ECO:0000255" key="4">
    <source>
        <dbReference type="HAMAP-Rule" id="MF_03107"/>
    </source>
</evidence>
<comment type="function">
    <text evidence="4">Component of the microsomal membrane bound fatty acid elongation system, which produces the 26-carbon very long-chain fatty acids (VLCFA) from palmitate. Catalyzes the reduction of the 3-ketoacyl-CoA intermediate that is formed in each cycle of fatty acid elongation. VLCFAs serve as precursors for ceramide and sphingolipids.</text>
</comment>
<comment type="catalytic activity">
    <reaction evidence="4">
        <text>a very-long-chain (3R)-3-hydroxyacyl-CoA + NADP(+) = a very-long-chain 3-oxoacyl-CoA + NADPH + H(+)</text>
        <dbReference type="Rhea" id="RHEA:48680"/>
        <dbReference type="ChEBI" id="CHEBI:15378"/>
        <dbReference type="ChEBI" id="CHEBI:57783"/>
        <dbReference type="ChEBI" id="CHEBI:58349"/>
        <dbReference type="ChEBI" id="CHEBI:85440"/>
        <dbReference type="ChEBI" id="CHEBI:90725"/>
        <dbReference type="EC" id="1.1.1.330"/>
    </reaction>
</comment>
<comment type="pathway">
    <text evidence="3">Lipid metabolism; fatty acid biosynthesis.</text>
</comment>
<comment type="subcellular location">
    <subcellularLocation>
        <location evidence="4">Endoplasmic reticulum membrane</location>
        <topology evidence="4">Single-pass membrane protein</topology>
    </subcellularLocation>
</comment>
<comment type="similarity">
    <text evidence="4">Belongs to the short-chain dehydrogenases/reductases (SDR) family.</text>
</comment>
<feature type="chain" id="PRO_0000357294" description="Very-long-chain 3-oxoacyl-CoA reductase">
    <location>
        <begin position="1"/>
        <end position="351"/>
    </location>
</feature>
<feature type="transmembrane region" description="Helical" evidence="4">
    <location>
        <begin position="26"/>
        <end position="46"/>
    </location>
</feature>
<feature type="active site" description="Proton donor" evidence="2">
    <location>
        <position position="225"/>
    </location>
</feature>
<feature type="active site" description="Lowers pKa of active site Tyr" evidence="2">
    <location>
        <position position="229"/>
    </location>
</feature>
<feature type="binding site" evidence="1">
    <location>
        <position position="72"/>
    </location>
    <ligand>
        <name>NADP(+)</name>
        <dbReference type="ChEBI" id="CHEBI:58349"/>
    </ligand>
</feature>
<feature type="binding site" evidence="1">
    <location>
        <position position="126"/>
    </location>
    <ligand>
        <name>NADP(+)</name>
        <dbReference type="ChEBI" id="CHEBI:58349"/>
    </ligand>
</feature>
<feature type="binding site" evidence="2">
    <location>
        <position position="153"/>
    </location>
    <ligand>
        <name>NADP(+)</name>
        <dbReference type="ChEBI" id="CHEBI:58349"/>
    </ligand>
</feature>
<feature type="binding site" evidence="2">
    <location>
        <position position="225"/>
    </location>
    <ligand>
        <name>NADP(+)</name>
        <dbReference type="ChEBI" id="CHEBI:58349"/>
    </ligand>
</feature>
<feature type="binding site" evidence="2">
    <location>
        <position position="229"/>
    </location>
    <ligand>
        <name>NADP(+)</name>
        <dbReference type="ChEBI" id="CHEBI:58349"/>
    </ligand>
</feature>
<feature type="binding site" evidence="2">
    <location>
        <position position="258"/>
    </location>
    <ligand>
        <name>NADP(+)</name>
        <dbReference type="ChEBI" id="CHEBI:58349"/>
    </ligand>
</feature>
<feature type="binding site" evidence="1">
    <location>
        <position position="260"/>
    </location>
    <ligand>
        <name>NADP(+)</name>
        <dbReference type="ChEBI" id="CHEBI:58349"/>
    </ligand>
</feature>
<dbReference type="EC" id="1.1.1.330" evidence="4"/>
<dbReference type="EMBL" id="AE016817">
    <property type="protein sequence ID" value="AAS51979.2"/>
    <property type="molecule type" value="Genomic_DNA"/>
</dbReference>
<dbReference type="RefSeq" id="NP_984155.2">
    <property type="nucleotide sequence ID" value="NM_209508.2"/>
</dbReference>
<dbReference type="SMR" id="Q75A60"/>
<dbReference type="FunCoup" id="Q75A60">
    <property type="interactions" value="706"/>
</dbReference>
<dbReference type="STRING" id="284811.Q75A60"/>
<dbReference type="EnsemblFungi" id="AAS51979">
    <property type="protein sequence ID" value="AAS51979"/>
    <property type="gene ID" value="AGOS_ADR059C"/>
</dbReference>
<dbReference type="GeneID" id="4620304"/>
<dbReference type="KEGG" id="ago:AGOS_ADR059C"/>
<dbReference type="eggNOG" id="KOG1014">
    <property type="taxonomic scope" value="Eukaryota"/>
</dbReference>
<dbReference type="HOGENOM" id="CLU_010194_38_0_1"/>
<dbReference type="InParanoid" id="Q75A60"/>
<dbReference type="OMA" id="LVAPGMM"/>
<dbReference type="OrthoDB" id="5545019at2759"/>
<dbReference type="UniPathway" id="UPA00094"/>
<dbReference type="Proteomes" id="UP000000591">
    <property type="component" value="Chromosome IV"/>
</dbReference>
<dbReference type="GO" id="GO:0005783">
    <property type="term" value="C:endoplasmic reticulum"/>
    <property type="evidence" value="ECO:0000318"/>
    <property type="project" value="GO_Central"/>
</dbReference>
<dbReference type="GO" id="GO:0005789">
    <property type="term" value="C:endoplasmic reticulum membrane"/>
    <property type="evidence" value="ECO:0007669"/>
    <property type="project" value="UniProtKB-SubCell"/>
</dbReference>
<dbReference type="GO" id="GO:0045703">
    <property type="term" value="F:ketoreductase activity"/>
    <property type="evidence" value="ECO:0007669"/>
    <property type="project" value="UniProtKB-UniRule"/>
</dbReference>
<dbReference type="GO" id="GO:0141040">
    <property type="term" value="F:very-long-chain 3-oxoacyl-CoA reductase activity"/>
    <property type="evidence" value="ECO:0007669"/>
    <property type="project" value="UniProtKB-EC"/>
</dbReference>
<dbReference type="GO" id="GO:0030497">
    <property type="term" value="P:fatty acid elongation"/>
    <property type="evidence" value="ECO:0000318"/>
    <property type="project" value="GO_Central"/>
</dbReference>
<dbReference type="GO" id="GO:0030148">
    <property type="term" value="P:sphingolipid biosynthetic process"/>
    <property type="evidence" value="ECO:0007669"/>
    <property type="project" value="EnsemblFungi"/>
</dbReference>
<dbReference type="GO" id="GO:0042761">
    <property type="term" value="P:very long-chain fatty acid biosynthetic process"/>
    <property type="evidence" value="ECO:0007669"/>
    <property type="project" value="EnsemblFungi"/>
</dbReference>
<dbReference type="CDD" id="cd05356">
    <property type="entry name" value="17beta-HSD1_like_SDR_c"/>
    <property type="match status" value="1"/>
</dbReference>
<dbReference type="FunFam" id="3.40.50.720:FF:000317">
    <property type="entry name" value="Very-long-chain 3-oxoacyl-CoA reductase"/>
    <property type="match status" value="1"/>
</dbReference>
<dbReference type="Gene3D" id="3.40.50.720">
    <property type="entry name" value="NAD(P)-binding Rossmann-like Domain"/>
    <property type="match status" value="1"/>
</dbReference>
<dbReference type="HAMAP" id="MF_03107">
    <property type="entry name" value="3_ketoreductase"/>
    <property type="match status" value="1"/>
</dbReference>
<dbReference type="InterPro" id="IPR027533">
    <property type="entry name" value="3_ketoreductase_fungal"/>
</dbReference>
<dbReference type="InterPro" id="IPR036291">
    <property type="entry name" value="NAD(P)-bd_dom_sf"/>
</dbReference>
<dbReference type="InterPro" id="IPR020904">
    <property type="entry name" value="Sc_DH/Rdtase_CS"/>
</dbReference>
<dbReference type="InterPro" id="IPR002347">
    <property type="entry name" value="SDR_fam"/>
</dbReference>
<dbReference type="PANTHER" id="PTHR43086:SF2">
    <property type="entry name" value="HYDROXYSTEROID DEHYDROGENASE-LIKE PROTEIN 1"/>
    <property type="match status" value="1"/>
</dbReference>
<dbReference type="PANTHER" id="PTHR43086">
    <property type="entry name" value="VERY-LONG-CHAIN 3-OXOOACYL-COA REDUCTASE"/>
    <property type="match status" value="1"/>
</dbReference>
<dbReference type="Pfam" id="PF00106">
    <property type="entry name" value="adh_short"/>
    <property type="match status" value="1"/>
</dbReference>
<dbReference type="PIRSF" id="PIRSF000126">
    <property type="entry name" value="11-beta-HSD1"/>
    <property type="match status" value="1"/>
</dbReference>
<dbReference type="PRINTS" id="PR00081">
    <property type="entry name" value="GDHRDH"/>
</dbReference>
<dbReference type="SUPFAM" id="SSF51735">
    <property type="entry name" value="NAD(P)-binding Rossmann-fold domains"/>
    <property type="match status" value="1"/>
</dbReference>
<dbReference type="PROSITE" id="PS00061">
    <property type="entry name" value="ADH_SHORT"/>
    <property type="match status" value="1"/>
</dbReference>